<protein>
    <recommendedName>
        <fullName evidence="2">Fulditoxin</fullName>
    </recommendedName>
    <alternativeName>
        <fullName evidence="2">Micrurus fulvius dimeric neurotoxin</fullName>
    </alternativeName>
    <alternativeName>
        <fullName evidence="2">SIGMA-neurotoxin</fullName>
    </alternativeName>
    <alternativeName>
        <fullName evidence="6">Three-finger toxin 3a</fullName>
        <shortName evidence="3">3FTx 3a</shortName>
    </alternativeName>
    <alternativeName>
        <fullName evidence="9">Three-finger toxin 9a</fullName>
    </alternativeName>
    <alternativeName>
        <fullName evidence="8">Three-finger toxin 9d</fullName>
    </alternativeName>
    <alternativeName>
        <fullName evidence="7">Three-finger toxin 9e</fullName>
    </alternativeName>
</protein>
<accession>U3FAE1</accession>
<proteinExistence type="evidence at protein level"/>
<sequence>MKTLLLTLVVVTIVCLDLGNSLKCYSSRTETMTCPEGEDKCEKYAVGLMHGSFFFIYTCTSKCHEGAYNVCCSTDLCNKSSTSG</sequence>
<keyword id="KW-0002">3D-structure</keyword>
<keyword id="KW-0008">Acetylcholine receptor inhibiting toxin</keyword>
<keyword id="KW-0903">Direct protein sequencing</keyword>
<keyword id="KW-1015">Disulfide bond</keyword>
<keyword id="KW-0479">Metal-binding</keyword>
<keyword id="KW-0528">Neurotoxin</keyword>
<keyword id="KW-0629">Postsynaptic neurotoxin</keyword>
<keyword id="KW-0964">Secreted</keyword>
<keyword id="KW-0732">Signal</keyword>
<keyword id="KW-0800">Toxin</keyword>
<keyword id="KW-0862">Zinc</keyword>
<reference evidence="6 7" key="1">
    <citation type="journal article" date="2013" name="BMC Genomics">
        <title>The venom-gland transcriptome of the eastern coral snake (Micrurus fulvius) reveals high venom complexity in the intragenomic evolution of venoms.</title>
        <authorList>
            <person name="Margres M.J."/>
            <person name="Aronow K."/>
            <person name="Loyacano J."/>
            <person name="Rokyta D.R."/>
        </authorList>
    </citation>
    <scope>NUCLEOTIDE SEQUENCE [MRNA]</scope>
    <source>
        <tissue>Venom gland</tissue>
    </source>
</reference>
<reference evidence="10" key="2">
    <citation type="journal article" date="2015" name="G3 (Bethesda)">
        <title>Post-transcriptional mechanisms contribute little to phenotypic variation in snake venoms.</title>
        <authorList>
            <person name="Rokyta D.R."/>
            <person name="Margres M.J."/>
            <person name="Calvin K."/>
        </authorList>
    </citation>
    <scope>NUCLEOTIDE SEQUENCE [LARGE SCALE MRNA]</scope>
    <source>
        <tissue>Venom gland</tissue>
    </source>
</reference>
<reference evidence="11" key="3">
    <citation type="journal article" date="2020" name="Br. J. Pharmacol.">
        <title>Fulditoxin, representing a new class of dimeric snake toxins, defines novel pharmacology at nicotinic ACh receptors.</title>
        <authorList>
            <person name="Foo C.S."/>
            <person name="Jobichen C."/>
            <person name="Hassan-Puttaswamy V."/>
            <person name="Dekan Z."/>
            <person name="Tae H.S."/>
            <person name="Bertrand D."/>
            <person name="Adams D.J."/>
            <person name="Alewood P.F."/>
            <person name="Sivaraman J."/>
            <person name="Nirthanan S."/>
            <person name="Kini R.M."/>
        </authorList>
    </citation>
    <scope>PROTEIN SEQUENCE OF 22-84</scope>
    <scope>X-RAY CRYSTALLOGRAPHY (1.95 ANGSTROMS) OF 22-79</scope>
    <scope>DISULFIDE BOND</scope>
    <scope>FUNCTION</scope>
    <scope>SUBUNIT</scope>
    <scope>SUBCELLULAR LOCATION</scope>
    <scope>MASS SPECTROMETRY</scope>
    <scope>SYNTHESIS OF 22-79</scope>
    <source>
        <tissue>Venom</tissue>
    </source>
</reference>
<name>3SXA_MICFL</name>
<dbReference type="EMBL" id="GAEP01001967">
    <property type="protein sequence ID" value="JAB52854.1"/>
    <property type="molecule type" value="mRNA"/>
</dbReference>
<dbReference type="EMBL" id="GBEW01001290">
    <property type="protein sequence ID" value="JAI09075.1"/>
    <property type="molecule type" value="mRNA"/>
</dbReference>
<dbReference type="EMBL" id="GBEW01001289">
    <property type="protein sequence ID" value="JAI09076.1"/>
    <property type="molecule type" value="mRNA"/>
</dbReference>
<dbReference type="EMBL" id="GBEW01001286">
    <property type="protein sequence ID" value="JAI09079.1"/>
    <property type="molecule type" value="mRNA"/>
</dbReference>
<dbReference type="EMBL" id="GDBF01000022">
    <property type="protein sequence ID" value="JAS05064.1"/>
    <property type="molecule type" value="Transcribed_RNA"/>
</dbReference>
<dbReference type="EMBL" id="GDBF01000021">
    <property type="protein sequence ID" value="JAS05065.1"/>
    <property type="molecule type" value="Transcribed_RNA"/>
</dbReference>
<dbReference type="EMBL" id="GDBF01000018">
    <property type="protein sequence ID" value="JAS05068.1"/>
    <property type="molecule type" value="Transcribed_RNA"/>
</dbReference>
<dbReference type="PDB" id="4RUD">
    <property type="method" value="X-ray"/>
    <property type="resolution" value="1.95 A"/>
    <property type="chains" value="A/B=22-79"/>
</dbReference>
<dbReference type="PDBsum" id="4RUD"/>
<dbReference type="SMR" id="U3FAE1"/>
<dbReference type="GO" id="GO:0005576">
    <property type="term" value="C:extracellular region"/>
    <property type="evidence" value="ECO:0007669"/>
    <property type="project" value="UniProtKB-SubCell"/>
</dbReference>
<dbReference type="GO" id="GO:0030550">
    <property type="term" value="F:acetylcholine receptor inhibitor activity"/>
    <property type="evidence" value="ECO:0007669"/>
    <property type="project" value="UniProtKB-KW"/>
</dbReference>
<dbReference type="GO" id="GO:0046872">
    <property type="term" value="F:metal ion binding"/>
    <property type="evidence" value="ECO:0007669"/>
    <property type="project" value="UniProtKB-KW"/>
</dbReference>
<dbReference type="GO" id="GO:0090729">
    <property type="term" value="F:toxin activity"/>
    <property type="evidence" value="ECO:0007669"/>
    <property type="project" value="UniProtKB-KW"/>
</dbReference>
<dbReference type="Gene3D" id="2.10.60.10">
    <property type="entry name" value="CD59"/>
    <property type="match status" value="1"/>
</dbReference>
<dbReference type="InterPro" id="IPR045860">
    <property type="entry name" value="Snake_toxin-like_sf"/>
</dbReference>
<dbReference type="SUPFAM" id="SSF57302">
    <property type="entry name" value="Snake toxin-like"/>
    <property type="match status" value="1"/>
</dbReference>
<organism>
    <name type="scientific">Micrurus fulvius</name>
    <name type="common">Eastern coral snake</name>
    <name type="synonym">Coluber fulvius</name>
    <dbReference type="NCBI Taxonomy" id="8637"/>
    <lineage>
        <taxon>Eukaryota</taxon>
        <taxon>Metazoa</taxon>
        <taxon>Chordata</taxon>
        <taxon>Craniata</taxon>
        <taxon>Vertebrata</taxon>
        <taxon>Euteleostomi</taxon>
        <taxon>Lepidosauria</taxon>
        <taxon>Squamata</taxon>
        <taxon>Bifurcata</taxon>
        <taxon>Unidentata</taxon>
        <taxon>Episquamata</taxon>
        <taxon>Toxicofera</taxon>
        <taxon>Serpentes</taxon>
        <taxon>Colubroidea</taxon>
        <taxon>Elapidae</taxon>
        <taxon>Elapinae</taxon>
        <taxon>Micrurus</taxon>
    </lineage>
</organism>
<evidence type="ECO:0000269" key="1">
    <source>
    </source>
</evidence>
<evidence type="ECO:0000303" key="2">
    <source>
    </source>
</evidence>
<evidence type="ECO:0000305" key="3"/>
<evidence type="ECO:0000305" key="4">
    <source>
    </source>
</evidence>
<evidence type="ECO:0000305" key="5">
    <source>
    </source>
</evidence>
<evidence type="ECO:0000312" key="6">
    <source>
        <dbReference type="EMBL" id="JAB52854.1"/>
    </source>
</evidence>
<evidence type="ECO:0000312" key="7">
    <source>
        <dbReference type="EMBL" id="JAI09075.1"/>
    </source>
</evidence>
<evidence type="ECO:0000312" key="8">
    <source>
        <dbReference type="EMBL" id="JAI09076.1"/>
    </source>
</evidence>
<evidence type="ECO:0000312" key="9">
    <source>
        <dbReference type="EMBL" id="JAI09079.1"/>
    </source>
</evidence>
<evidence type="ECO:0000312" key="10">
    <source>
        <dbReference type="EMBL" id="JAS05064.1"/>
    </source>
</evidence>
<evidence type="ECO:0007744" key="11">
    <source>
        <dbReference type="PDB" id="4RUD"/>
    </source>
</evidence>
<evidence type="ECO:0007829" key="12">
    <source>
        <dbReference type="PDB" id="4RUD"/>
    </source>
</evidence>
<comment type="function">
    <text evidence="1">Postsynaptic neurotoxin that produces potent, and completely reversible, postsynaptic neuromuscular blockade, as well as broad spectrum inhibition of human muscle and neuronal nicotinic acetylcholine receptors (nAChRs). Inhibition is potent or moderate, depending on the receptor (alpha-1-beta-1-delta-epsilon/CHRNA1-CHRNB1-CHRND-CHRNE (IC(50)=2.56 uM), alpha-4-beta-2/CHRNA4-CHRNB2 (IC(50)=1.8 uM), alpha-7/CHRNA7 (IC(50)=7 uM), and alpha-3-beta-2/CHRNA3-CHRNB2 (IC(50)=12.6 uM)) (PubMed:31877243). Acts as a competitive antagonist of ACh (PubMed:31877243). Binds to chicken muscle-type nicotinic acetylcholine receptor (AChR) with high potency compared with the cloned human receptor (PubMed:31877243). Unlike short-chain alpha-3FTxs that only bind to muscle nAChRs, this toxin utilizes dimerization to expand its pharmacological targets to block neuronal nAChRs (PubMed:31877243).</text>
</comment>
<comment type="subunit">
    <text evidence="1">Homodimer; non-covalently linked. Is able to form a tetramer of dimers in the presence of 2 zinc ions.</text>
</comment>
<comment type="subcellular location">
    <subcellularLocation>
        <location evidence="1">Secreted</location>
    </subcellularLocation>
</comment>
<comment type="tissue specificity">
    <text evidence="4">Expressed by the venom gland.</text>
</comment>
<comment type="mass spectrometry">
    <text>Only one subunit.</text>
</comment>
<comment type="miscellaneous">
    <text evidence="1">Negative results: weakly inhibits human alpha-4-beta-4/CHRNA4-CHRNB4 and has no activity on human alpha-9-alpha-10/CHRNA9-CHRNA10 and human alpha-3-beta-4/CHRNA3-CHRNB4 nAChRs.</text>
</comment>
<comment type="similarity">
    <text evidence="3">Belongs to the three-finger toxin family. Short-chain subfamily.</text>
</comment>
<feature type="signal peptide" evidence="1">
    <location>
        <begin position="1"/>
        <end position="21"/>
    </location>
</feature>
<feature type="chain" id="PRO_0000452325" description="Fulditoxin" evidence="1">
    <location>
        <begin position="22"/>
        <end position="84"/>
    </location>
</feature>
<feature type="binding site" evidence="1 11">
    <location>
        <position position="50"/>
    </location>
    <ligand>
        <name>Zn(2+)</name>
        <dbReference type="ChEBI" id="CHEBI:29105"/>
    </ligand>
</feature>
<feature type="site" description="Contributes to dimerization" evidence="5">
    <location>
        <position position="58"/>
    </location>
</feature>
<feature type="site" description="Contributes to dimerization" evidence="5">
    <location>
        <position position="61"/>
    </location>
</feature>
<feature type="site" description="Contributes to dimerization" evidence="5">
    <location>
        <position position="64"/>
    </location>
</feature>
<feature type="disulfide bond" evidence="1 11">
    <location>
        <begin position="24"/>
        <end position="41"/>
    </location>
</feature>
<feature type="disulfide bond" evidence="1 11">
    <location>
        <begin position="34"/>
        <end position="59"/>
    </location>
</feature>
<feature type="disulfide bond" evidence="1 11">
    <location>
        <begin position="63"/>
        <end position="71"/>
    </location>
</feature>
<feature type="disulfide bond" evidence="1 11">
    <location>
        <begin position="72"/>
        <end position="77"/>
    </location>
</feature>
<feature type="strand" evidence="12">
    <location>
        <begin position="23"/>
        <end position="29"/>
    </location>
</feature>
<feature type="strand" evidence="12">
    <location>
        <begin position="31"/>
        <end position="33"/>
    </location>
</feature>
<feature type="strand" evidence="12">
    <location>
        <begin position="40"/>
        <end position="47"/>
    </location>
</feature>
<feature type="strand" evidence="12">
    <location>
        <begin position="53"/>
        <end position="62"/>
    </location>
</feature>
<feature type="strand" evidence="12">
    <location>
        <begin position="70"/>
        <end position="72"/>
    </location>
</feature>
<feature type="turn" evidence="12">
    <location>
        <begin position="75"/>
        <end position="78"/>
    </location>
</feature>